<dbReference type="EMBL" id="CP000612">
    <property type="protein sequence ID" value="ABO50212.1"/>
    <property type="molecule type" value="Genomic_DNA"/>
</dbReference>
<dbReference type="RefSeq" id="WP_011878027.1">
    <property type="nucleotide sequence ID" value="NC_009253.1"/>
</dbReference>
<dbReference type="SMR" id="A4J559"/>
<dbReference type="STRING" id="349161.Dred_1685"/>
<dbReference type="KEGG" id="drm:Dred_1685"/>
<dbReference type="eggNOG" id="COG0543">
    <property type="taxonomic scope" value="Bacteria"/>
</dbReference>
<dbReference type="HOGENOM" id="CLU_003827_1_2_9"/>
<dbReference type="OrthoDB" id="9789468at2"/>
<dbReference type="UniPathway" id="UPA00070">
    <property type="reaction ID" value="UER00945"/>
</dbReference>
<dbReference type="Proteomes" id="UP000001556">
    <property type="component" value="Chromosome"/>
</dbReference>
<dbReference type="GO" id="GO:0005737">
    <property type="term" value="C:cytoplasm"/>
    <property type="evidence" value="ECO:0007669"/>
    <property type="project" value="UniProtKB-SubCell"/>
</dbReference>
<dbReference type="GO" id="GO:0051537">
    <property type="term" value="F:2 iron, 2 sulfur cluster binding"/>
    <property type="evidence" value="ECO:0007669"/>
    <property type="project" value="UniProtKB-KW"/>
</dbReference>
<dbReference type="GO" id="GO:0009055">
    <property type="term" value="F:electron transfer activity"/>
    <property type="evidence" value="ECO:0007669"/>
    <property type="project" value="UniProtKB-UniRule"/>
</dbReference>
<dbReference type="GO" id="GO:0050660">
    <property type="term" value="F:flavin adenine dinucleotide binding"/>
    <property type="evidence" value="ECO:0007669"/>
    <property type="project" value="InterPro"/>
</dbReference>
<dbReference type="GO" id="GO:0046872">
    <property type="term" value="F:metal ion binding"/>
    <property type="evidence" value="ECO:0007669"/>
    <property type="project" value="UniProtKB-KW"/>
</dbReference>
<dbReference type="GO" id="GO:0016491">
    <property type="term" value="F:oxidoreductase activity"/>
    <property type="evidence" value="ECO:0007669"/>
    <property type="project" value="InterPro"/>
</dbReference>
<dbReference type="GO" id="GO:0044205">
    <property type="term" value="P:'de novo' UMP biosynthetic process"/>
    <property type="evidence" value="ECO:0007669"/>
    <property type="project" value="UniProtKB-UniRule"/>
</dbReference>
<dbReference type="CDD" id="cd06218">
    <property type="entry name" value="DHOD_e_trans"/>
    <property type="match status" value="1"/>
</dbReference>
<dbReference type="Gene3D" id="2.10.240.10">
    <property type="entry name" value="Dihydroorotate dehydrogenase, electron transfer subunit"/>
    <property type="match status" value="1"/>
</dbReference>
<dbReference type="Gene3D" id="3.40.50.80">
    <property type="entry name" value="Nucleotide-binding domain of ferredoxin-NADP reductase (FNR) module"/>
    <property type="match status" value="1"/>
</dbReference>
<dbReference type="Gene3D" id="2.40.30.10">
    <property type="entry name" value="Translation factors"/>
    <property type="match status" value="1"/>
</dbReference>
<dbReference type="HAMAP" id="MF_01211">
    <property type="entry name" value="DHODB_Fe_S_bind"/>
    <property type="match status" value="1"/>
</dbReference>
<dbReference type="InterPro" id="IPR008333">
    <property type="entry name" value="Cbr1-like_FAD-bd_dom"/>
</dbReference>
<dbReference type="InterPro" id="IPR012165">
    <property type="entry name" value="Cyt_c3_hydrogenase_gsu"/>
</dbReference>
<dbReference type="InterPro" id="IPR037117">
    <property type="entry name" value="Dihydroorotate_DH_ele_sf"/>
</dbReference>
<dbReference type="InterPro" id="IPR019480">
    <property type="entry name" value="Dihydroorotate_DH_Fe-S-bd"/>
</dbReference>
<dbReference type="InterPro" id="IPR023455">
    <property type="entry name" value="Dihydroorotate_DHASE_ETsu"/>
</dbReference>
<dbReference type="InterPro" id="IPR017927">
    <property type="entry name" value="FAD-bd_FR_type"/>
</dbReference>
<dbReference type="InterPro" id="IPR039261">
    <property type="entry name" value="FNR_nucleotide-bd"/>
</dbReference>
<dbReference type="InterPro" id="IPR001433">
    <property type="entry name" value="OxRdtase_FAD/NAD-bd"/>
</dbReference>
<dbReference type="InterPro" id="IPR050353">
    <property type="entry name" value="PyrK_electron_transfer"/>
</dbReference>
<dbReference type="InterPro" id="IPR017938">
    <property type="entry name" value="Riboflavin_synthase-like_b-brl"/>
</dbReference>
<dbReference type="PANTHER" id="PTHR43513">
    <property type="entry name" value="DIHYDROOROTATE DEHYDROGENASE B (NAD(+)), ELECTRON TRANSFER SUBUNIT"/>
    <property type="match status" value="1"/>
</dbReference>
<dbReference type="PANTHER" id="PTHR43513:SF3">
    <property type="entry name" value="DIHYDROOROTATE DEHYDROGENASE B (NAD(+)), ELECTRON TRANSFER SUBUNIT-RELATED"/>
    <property type="match status" value="1"/>
</dbReference>
<dbReference type="Pfam" id="PF10418">
    <property type="entry name" value="DHODB_Fe-S_bind"/>
    <property type="match status" value="1"/>
</dbReference>
<dbReference type="Pfam" id="PF00970">
    <property type="entry name" value="FAD_binding_6"/>
    <property type="match status" value="1"/>
</dbReference>
<dbReference type="Pfam" id="PF00175">
    <property type="entry name" value="NAD_binding_1"/>
    <property type="match status" value="1"/>
</dbReference>
<dbReference type="PIRSF" id="PIRSF006816">
    <property type="entry name" value="Cyc3_hyd_g"/>
    <property type="match status" value="1"/>
</dbReference>
<dbReference type="SUPFAM" id="SSF52343">
    <property type="entry name" value="Ferredoxin reductase-like, C-terminal NADP-linked domain"/>
    <property type="match status" value="1"/>
</dbReference>
<dbReference type="SUPFAM" id="SSF63380">
    <property type="entry name" value="Riboflavin synthase domain-like"/>
    <property type="match status" value="1"/>
</dbReference>
<dbReference type="PROSITE" id="PS51384">
    <property type="entry name" value="FAD_FR"/>
    <property type="match status" value="1"/>
</dbReference>
<comment type="function">
    <text evidence="1">Responsible for channeling the electrons from the oxidation of dihydroorotate from the FMN redox center in the PyrD type B subunit to the ultimate electron acceptor NAD(+).</text>
</comment>
<comment type="function">
    <text evidence="2">Together with PyrD, also forms a metal reductase complex able to reduce Fe(III)-chelates to Fe(II)-chelates, as well as soluble Cr(VI) and U(VI), using NADH as electron donor. To a lesser extent, can also use NADPH as an electron donor. Is unable to reduce riboflavin and FMN with NADH as electron donor. May have an in vivo role in metal reduction in D.reducens, which is an organism capable of reducing contaminant heavy metals and radionuclides.</text>
</comment>
<comment type="cofactor">
    <cofactor evidence="1">
        <name>FAD</name>
        <dbReference type="ChEBI" id="CHEBI:57692"/>
    </cofactor>
    <text evidence="1">Binds 1 FAD per subunit.</text>
</comment>
<comment type="cofactor">
    <cofactor evidence="1 3">
        <name>[2Fe-2S] cluster</name>
        <dbReference type="ChEBI" id="CHEBI:190135"/>
    </cofactor>
    <text evidence="1">Binds 1 [2Fe-2S] cluster per subunit.</text>
</comment>
<comment type="pathway">
    <text evidence="1">Pyrimidine metabolism; UMP biosynthesis via de novo pathway; orotate from (S)-dihydroorotate (NAD(+) route): step 1/1.</text>
</comment>
<comment type="subunit">
    <text evidence="1 2">Heterotetramer of 2 PyrK and 2 PyrD type B subunits (By similarity). However, the metal reductase complex seems to be composed of a heterooctamer of 4 PyrK and 4 PyrD subunits (PubMed:25389064).</text>
</comment>
<comment type="subcellular location">
    <subcellularLocation>
        <location evidence="3">Cytoplasm</location>
    </subcellularLocation>
    <text evidence="2">Was recovered from both the soluble as well as the insoluble (presumably membrane) protein fraction, and thus may be in some way also associated with the membrane.</text>
</comment>
<comment type="similarity">
    <text evidence="1">Belongs to the PyrK family.</text>
</comment>
<feature type="chain" id="PRO_0000439794" description="Dihydroorotate dehydrogenase B (NAD(+)), electron transfer subunit">
    <location>
        <begin position="1"/>
        <end position="262"/>
    </location>
</feature>
<feature type="domain" description="FAD-binding FR-type" evidence="1">
    <location>
        <begin position="2"/>
        <end position="102"/>
    </location>
</feature>
<feature type="binding site" evidence="1">
    <location>
        <begin position="53"/>
        <end position="56"/>
    </location>
    <ligand>
        <name>FAD</name>
        <dbReference type="ChEBI" id="CHEBI:57692"/>
    </ligand>
</feature>
<feature type="binding site" evidence="1">
    <location>
        <begin position="70"/>
        <end position="72"/>
    </location>
    <ligand>
        <name>FAD</name>
        <dbReference type="ChEBI" id="CHEBI:57692"/>
    </ligand>
</feature>
<feature type="binding site" evidence="1">
    <location>
        <begin position="77"/>
        <end position="78"/>
    </location>
    <ligand>
        <name>FAD</name>
        <dbReference type="ChEBI" id="CHEBI:57692"/>
    </ligand>
</feature>
<feature type="binding site" evidence="1">
    <location>
        <position position="224"/>
    </location>
    <ligand>
        <name>[2Fe-2S] cluster</name>
        <dbReference type="ChEBI" id="CHEBI:190135"/>
    </ligand>
</feature>
<feature type="binding site" evidence="1">
    <location>
        <position position="229"/>
    </location>
    <ligand>
        <name>[2Fe-2S] cluster</name>
        <dbReference type="ChEBI" id="CHEBI:190135"/>
    </ligand>
</feature>
<feature type="binding site" evidence="1">
    <location>
        <position position="232"/>
    </location>
    <ligand>
        <name>[2Fe-2S] cluster</name>
        <dbReference type="ChEBI" id="CHEBI:190135"/>
    </ligand>
</feature>
<feature type="binding site" evidence="1">
    <location>
        <position position="248"/>
    </location>
    <ligand>
        <name>[2Fe-2S] cluster</name>
        <dbReference type="ChEBI" id="CHEBI:190135"/>
    </ligand>
</feature>
<accession>A4J559</accession>
<keyword id="KW-0001">2Fe-2S</keyword>
<keyword id="KW-0963">Cytoplasm</keyword>
<keyword id="KW-0249">Electron transport</keyword>
<keyword id="KW-0274">FAD</keyword>
<keyword id="KW-0285">Flavoprotein</keyword>
<keyword id="KW-0408">Iron</keyword>
<keyword id="KW-0411">Iron-sulfur</keyword>
<keyword id="KW-0479">Metal-binding</keyword>
<keyword id="KW-0665">Pyrimidine biosynthesis</keyword>
<keyword id="KW-1185">Reference proteome</keyword>
<keyword id="KW-0813">Transport</keyword>
<reference key="1">
    <citation type="submission" date="2007-03" db="EMBL/GenBank/DDBJ databases">
        <title>Complete sequence of Desulfotomaculum reducens MI-1.</title>
        <authorList>
            <consortium name="US DOE Joint Genome Institute"/>
            <person name="Copeland A."/>
            <person name="Lucas S."/>
            <person name="Lapidus A."/>
            <person name="Barry K."/>
            <person name="Detter J.C."/>
            <person name="Glavina del Rio T."/>
            <person name="Hammon N."/>
            <person name="Israni S."/>
            <person name="Dalin E."/>
            <person name="Tice H."/>
            <person name="Pitluck S."/>
            <person name="Sims D."/>
            <person name="Brettin T."/>
            <person name="Bruce D."/>
            <person name="Han C."/>
            <person name="Tapia R."/>
            <person name="Schmutz J."/>
            <person name="Larimer F."/>
            <person name="Land M."/>
            <person name="Hauser L."/>
            <person name="Kyrpides N."/>
            <person name="Kim E."/>
            <person name="Tebo B.M."/>
            <person name="Richardson P."/>
        </authorList>
    </citation>
    <scope>NUCLEOTIDE SEQUENCE [LARGE SCALE GENOMIC DNA]</scope>
    <source>
        <strain>ATCC BAA-1160 / DSM 100696 / MI-1</strain>
    </source>
</reference>
<reference key="2">
    <citation type="journal article" date="2015" name="Environ. Microbiol.">
        <title>Identification of proteins capable of metal reduction from the proteome of the Gram-positive bacterium Desulfotomaculum reducens MI-1 using an NADH-based activity assay.</title>
        <authorList>
            <person name="Otwell A.E."/>
            <person name="Sherwood R.W."/>
            <person name="Zhang S."/>
            <person name="Nelson O.D."/>
            <person name="Li Z."/>
            <person name="Lin H."/>
            <person name="Callister S.J."/>
            <person name="Richardson R.E."/>
        </authorList>
    </citation>
    <scope>FUNCTION</scope>
    <scope>SUBUNIT</scope>
    <scope>COFACTOR</scope>
    <scope>SUBCELLULAR LOCATION</scope>
    <source>
        <strain>ATCC BAA-1160 / DSM 100696 / MI-1</strain>
    </source>
</reference>
<proteinExistence type="evidence at protein level"/>
<name>PYRK_DESRM</name>
<gene>
    <name evidence="1" type="primary">pyrK</name>
    <name evidence="4" type="ordered locus">Dred_1685</name>
</gene>
<protein>
    <recommendedName>
        <fullName evidence="1">Dihydroorotate dehydrogenase B (NAD(+)), electron transfer subunit</fullName>
    </recommendedName>
    <alternativeName>
        <fullName evidence="1">Dihydroorotate oxidase B, electron transfer subunit</fullName>
    </alternativeName>
</protein>
<sequence>MSKVFDAKVLAVYMVAPNTYYMEFDAPDIARLAVPGQFVHVRCGETNDPLLRRPISIHMVSRPKGVLALLFRVVGKGTEILSQQKPGDRVNMMGPLGRGFTLPLPGSKVAVAAGGIGAAPLVFLVQELANIKCQVTVYLGARDKRSILCDGQFIQMEAEVVIATDDGSLGFKGTVPELMKRHMDWRKTAMTYVCGPGIMMKEISTMLAEADVPGEVSLEERMGCGVGACLSCAVKISHHGQISNKRACFEGPVFPSWQVVWE</sequence>
<evidence type="ECO:0000255" key="1">
    <source>
        <dbReference type="HAMAP-Rule" id="MF_01211"/>
    </source>
</evidence>
<evidence type="ECO:0000269" key="2">
    <source>
    </source>
</evidence>
<evidence type="ECO:0000305" key="3">
    <source>
    </source>
</evidence>
<evidence type="ECO:0000312" key="4">
    <source>
        <dbReference type="EMBL" id="ABO50212.1"/>
    </source>
</evidence>
<organism>
    <name type="scientific">Desulforamulus reducens (strain ATCC BAA-1160 / DSM 100696 / MI-1)</name>
    <name type="common">Desulfotomaculum reducens</name>
    <dbReference type="NCBI Taxonomy" id="349161"/>
    <lineage>
        <taxon>Bacteria</taxon>
        <taxon>Bacillati</taxon>
        <taxon>Bacillota</taxon>
        <taxon>Clostridia</taxon>
        <taxon>Eubacteriales</taxon>
        <taxon>Peptococcaceae</taxon>
        <taxon>Desulforamulus</taxon>
    </lineage>
</organism>